<dbReference type="EMBL" id="CP000230">
    <property type="protein sequence ID" value="ABC24242.1"/>
    <property type="status" value="ALT_INIT"/>
    <property type="molecule type" value="Genomic_DNA"/>
</dbReference>
<dbReference type="RefSeq" id="YP_428529.1">
    <property type="nucleotide sequence ID" value="NC_007643.1"/>
</dbReference>
<dbReference type="SMR" id="Q2RNQ3"/>
<dbReference type="STRING" id="269796.Rru_A3448"/>
<dbReference type="EnsemblBacteria" id="ABC24242">
    <property type="protein sequence ID" value="ABC24242"/>
    <property type="gene ID" value="Rru_A3448"/>
</dbReference>
<dbReference type="KEGG" id="rru:Rru_A3448"/>
<dbReference type="PATRIC" id="fig|269796.9.peg.3564"/>
<dbReference type="eggNOG" id="COG1660">
    <property type="taxonomic scope" value="Bacteria"/>
</dbReference>
<dbReference type="HOGENOM" id="CLU_059558_0_0_5"/>
<dbReference type="PhylomeDB" id="Q2RNQ3"/>
<dbReference type="Proteomes" id="UP000001929">
    <property type="component" value="Chromosome"/>
</dbReference>
<dbReference type="GO" id="GO:0005524">
    <property type="term" value="F:ATP binding"/>
    <property type="evidence" value="ECO:0007669"/>
    <property type="project" value="UniProtKB-UniRule"/>
</dbReference>
<dbReference type="GO" id="GO:0005525">
    <property type="term" value="F:GTP binding"/>
    <property type="evidence" value="ECO:0007669"/>
    <property type="project" value="UniProtKB-UniRule"/>
</dbReference>
<dbReference type="HAMAP" id="MF_00636">
    <property type="entry name" value="RapZ_like"/>
    <property type="match status" value="1"/>
</dbReference>
<dbReference type="InterPro" id="IPR027417">
    <property type="entry name" value="P-loop_NTPase"/>
</dbReference>
<dbReference type="InterPro" id="IPR005337">
    <property type="entry name" value="RapZ-like"/>
</dbReference>
<dbReference type="InterPro" id="IPR053930">
    <property type="entry name" value="RapZ-like_N"/>
</dbReference>
<dbReference type="InterPro" id="IPR053931">
    <property type="entry name" value="RapZ_C"/>
</dbReference>
<dbReference type="NCBIfam" id="NF003828">
    <property type="entry name" value="PRK05416.1"/>
    <property type="match status" value="1"/>
</dbReference>
<dbReference type="PANTHER" id="PTHR30448">
    <property type="entry name" value="RNASE ADAPTER PROTEIN RAPZ"/>
    <property type="match status" value="1"/>
</dbReference>
<dbReference type="PANTHER" id="PTHR30448:SF0">
    <property type="entry name" value="RNASE ADAPTER PROTEIN RAPZ"/>
    <property type="match status" value="1"/>
</dbReference>
<dbReference type="Pfam" id="PF22740">
    <property type="entry name" value="PapZ_C"/>
    <property type="match status" value="1"/>
</dbReference>
<dbReference type="Pfam" id="PF03668">
    <property type="entry name" value="RapZ-like_N"/>
    <property type="match status" value="1"/>
</dbReference>
<dbReference type="PIRSF" id="PIRSF005052">
    <property type="entry name" value="P-loopkin"/>
    <property type="match status" value="1"/>
</dbReference>
<dbReference type="SUPFAM" id="SSF52540">
    <property type="entry name" value="P-loop containing nucleoside triphosphate hydrolases"/>
    <property type="match status" value="1"/>
</dbReference>
<reference key="1">
    <citation type="journal article" date="2011" name="Stand. Genomic Sci.">
        <title>Complete genome sequence of Rhodospirillum rubrum type strain (S1).</title>
        <authorList>
            <person name="Munk A.C."/>
            <person name="Copeland A."/>
            <person name="Lucas S."/>
            <person name="Lapidus A."/>
            <person name="Del Rio T.G."/>
            <person name="Barry K."/>
            <person name="Detter J.C."/>
            <person name="Hammon N."/>
            <person name="Israni S."/>
            <person name="Pitluck S."/>
            <person name="Brettin T."/>
            <person name="Bruce D."/>
            <person name="Han C."/>
            <person name="Tapia R."/>
            <person name="Gilna P."/>
            <person name="Schmutz J."/>
            <person name="Larimer F."/>
            <person name="Land M."/>
            <person name="Kyrpides N.C."/>
            <person name="Mavromatis K."/>
            <person name="Richardson P."/>
            <person name="Rohde M."/>
            <person name="Goeker M."/>
            <person name="Klenk H.P."/>
            <person name="Zhang Y."/>
            <person name="Roberts G.P."/>
            <person name="Reslewic S."/>
            <person name="Schwartz D.C."/>
        </authorList>
    </citation>
    <scope>NUCLEOTIDE SEQUENCE [LARGE SCALE GENOMIC DNA]</scope>
    <source>
        <strain>ATCC 11170 / ATH 1.1.1 / DSM 467 / LMG 4362 / NCIMB 8255 / S1</strain>
    </source>
</reference>
<feature type="chain" id="PRO_0000258992" description="Nucleotide-binding protein Rru_A3448">
    <location>
        <begin position="1"/>
        <end position="319"/>
    </location>
</feature>
<feature type="region of interest" description="Disordered" evidence="2">
    <location>
        <begin position="1"/>
        <end position="34"/>
    </location>
</feature>
<feature type="binding site" evidence="1">
    <location>
        <begin position="42"/>
        <end position="49"/>
    </location>
    <ligand>
        <name>ATP</name>
        <dbReference type="ChEBI" id="CHEBI:30616"/>
    </ligand>
</feature>
<feature type="binding site" evidence="1">
    <location>
        <begin position="90"/>
        <end position="93"/>
    </location>
    <ligand>
        <name>GTP</name>
        <dbReference type="ChEBI" id="CHEBI:37565"/>
    </ligand>
</feature>
<keyword id="KW-0067">ATP-binding</keyword>
<keyword id="KW-0342">GTP-binding</keyword>
<keyword id="KW-0547">Nucleotide-binding</keyword>
<keyword id="KW-1185">Reference proteome</keyword>
<gene>
    <name type="ordered locus">Rru_A3448</name>
</gene>
<protein>
    <recommendedName>
        <fullName evidence="1">Nucleotide-binding protein Rru_A3448</fullName>
    </recommendedName>
</protein>
<organism>
    <name type="scientific">Rhodospirillum rubrum (strain ATCC 11170 / ATH 1.1.1 / DSM 467 / LMG 4362 / NCIMB 8255 / S1)</name>
    <dbReference type="NCBI Taxonomy" id="269796"/>
    <lineage>
        <taxon>Bacteria</taxon>
        <taxon>Pseudomonadati</taxon>
        <taxon>Pseudomonadota</taxon>
        <taxon>Alphaproteobacteria</taxon>
        <taxon>Rhodospirillales</taxon>
        <taxon>Rhodospirillaceae</taxon>
        <taxon>Rhodospirillum</taxon>
    </lineage>
</organism>
<name>Y3448_RHORT</name>
<evidence type="ECO:0000255" key="1">
    <source>
        <dbReference type="HAMAP-Rule" id="MF_00636"/>
    </source>
</evidence>
<evidence type="ECO:0000256" key="2">
    <source>
        <dbReference type="SAM" id="MobiDB-lite"/>
    </source>
</evidence>
<evidence type="ECO:0000305" key="3"/>
<proteinExistence type="inferred from homology"/>
<sequence length="319" mass="35238">MGRSASLLRLRDPAPLPTDIAPDPAEAPPSPAADRRVIVVTGMSGAGRTTVLRALEDIGYEAVDNLPLSLFEALTQGRWDQPRPLVLGIDTRTRGFHAATVLAAIERLVAATGFDVRLLFIDCDDEVLVRRYTETRRRHPLAVDRPLADGIALERALVAPLKERASRCLDTSILPPAKLRAVIEAEFSLDHRPELAIFVSSFGFRNGLPREADLVFDVRFLANPHYEPHLREMTGLDPAVAAYVAADPDFAPLIDRVTALLALLVPRYEKEGKSYLTIAIGCTGGKHRSVYTAERLAAWLNETGRRAHVRHRDLKETPR</sequence>
<comment type="function">
    <text evidence="1">Displays ATPase and GTPase activities.</text>
</comment>
<comment type="similarity">
    <text evidence="1">Belongs to the RapZ-like family.</text>
</comment>
<comment type="sequence caution" evidence="3">
    <conflict type="erroneous initiation">
        <sequence resource="EMBL-CDS" id="ABC24242"/>
    </conflict>
</comment>
<accession>Q2RNQ3</accession>